<gene>
    <name evidence="1" type="primary">TIF35</name>
    <name type="ORF">UMAG_03952</name>
</gene>
<dbReference type="EMBL" id="CM003150">
    <property type="protein sequence ID" value="KIS67899.1"/>
    <property type="molecule type" value="Genomic_DNA"/>
</dbReference>
<dbReference type="RefSeq" id="XP_011390420.1">
    <property type="nucleotide sequence ID" value="XM_011392118.1"/>
</dbReference>
<dbReference type="SMR" id="Q4P7G1"/>
<dbReference type="FunCoup" id="Q4P7G1">
    <property type="interactions" value="545"/>
</dbReference>
<dbReference type="STRING" id="237631.Q4P7G1"/>
<dbReference type="EnsemblFungi" id="KIS67899">
    <property type="protein sequence ID" value="KIS67899"/>
    <property type="gene ID" value="UMAG_03952"/>
</dbReference>
<dbReference type="GeneID" id="23564268"/>
<dbReference type="KEGG" id="uma:UMAG_03952"/>
<dbReference type="VEuPathDB" id="FungiDB:UMAG_03952"/>
<dbReference type="eggNOG" id="KOG0122">
    <property type="taxonomic scope" value="Eukaryota"/>
</dbReference>
<dbReference type="HOGENOM" id="CLU_034595_0_0_1"/>
<dbReference type="InParanoid" id="Q4P7G1"/>
<dbReference type="OMA" id="ICQGDHF"/>
<dbReference type="OrthoDB" id="639027at2759"/>
<dbReference type="Proteomes" id="UP000000561">
    <property type="component" value="Chromosome 11"/>
</dbReference>
<dbReference type="GO" id="GO:0016282">
    <property type="term" value="C:eukaryotic 43S preinitiation complex"/>
    <property type="evidence" value="ECO:0007669"/>
    <property type="project" value="UniProtKB-UniRule"/>
</dbReference>
<dbReference type="GO" id="GO:0033290">
    <property type="term" value="C:eukaryotic 48S preinitiation complex"/>
    <property type="evidence" value="ECO:0007669"/>
    <property type="project" value="UniProtKB-UniRule"/>
</dbReference>
<dbReference type="GO" id="GO:0071540">
    <property type="term" value="C:eukaryotic translation initiation factor 3 complex, eIF3e"/>
    <property type="evidence" value="ECO:0007669"/>
    <property type="project" value="EnsemblFungi"/>
</dbReference>
<dbReference type="GO" id="GO:0071541">
    <property type="term" value="C:eukaryotic translation initiation factor 3 complex, eIF3m"/>
    <property type="evidence" value="ECO:0007669"/>
    <property type="project" value="EnsemblFungi"/>
</dbReference>
<dbReference type="GO" id="GO:0043614">
    <property type="term" value="C:multi-eIF complex"/>
    <property type="evidence" value="ECO:0007669"/>
    <property type="project" value="EnsemblFungi"/>
</dbReference>
<dbReference type="GO" id="GO:0003723">
    <property type="term" value="F:RNA binding"/>
    <property type="evidence" value="ECO:0007669"/>
    <property type="project" value="UniProtKB-UniRule"/>
</dbReference>
<dbReference type="GO" id="GO:0003743">
    <property type="term" value="F:translation initiation factor activity"/>
    <property type="evidence" value="ECO:0007669"/>
    <property type="project" value="UniProtKB-UniRule"/>
</dbReference>
<dbReference type="GO" id="GO:0001732">
    <property type="term" value="P:formation of cytoplasmic translation initiation complex"/>
    <property type="evidence" value="ECO:0007669"/>
    <property type="project" value="UniProtKB-UniRule"/>
</dbReference>
<dbReference type="GO" id="GO:0002188">
    <property type="term" value="P:translation reinitiation"/>
    <property type="evidence" value="ECO:0007669"/>
    <property type="project" value="EnsemblFungi"/>
</dbReference>
<dbReference type="GO" id="GO:0006415">
    <property type="term" value="P:translational termination"/>
    <property type="evidence" value="ECO:0007669"/>
    <property type="project" value="EnsemblFungi"/>
</dbReference>
<dbReference type="CDD" id="cd12933">
    <property type="entry name" value="eIF3G"/>
    <property type="match status" value="1"/>
</dbReference>
<dbReference type="CDD" id="cd12408">
    <property type="entry name" value="RRM_eIF3G_like"/>
    <property type="match status" value="1"/>
</dbReference>
<dbReference type="FunFam" id="3.30.70.330:FF:000657">
    <property type="entry name" value="Eukaryotic translation initiation factor 3 subunit G"/>
    <property type="match status" value="1"/>
</dbReference>
<dbReference type="Gene3D" id="3.30.70.330">
    <property type="match status" value="1"/>
</dbReference>
<dbReference type="HAMAP" id="MF_03006">
    <property type="entry name" value="eIF3g"/>
    <property type="match status" value="1"/>
</dbReference>
<dbReference type="InterPro" id="IPR017334">
    <property type="entry name" value="eIF3_g"/>
</dbReference>
<dbReference type="InterPro" id="IPR024675">
    <property type="entry name" value="eIF3g_N"/>
</dbReference>
<dbReference type="InterPro" id="IPR034240">
    <property type="entry name" value="eIF3G_RRM"/>
</dbReference>
<dbReference type="InterPro" id="IPR012677">
    <property type="entry name" value="Nucleotide-bd_a/b_plait_sf"/>
</dbReference>
<dbReference type="InterPro" id="IPR035979">
    <property type="entry name" value="RBD_domain_sf"/>
</dbReference>
<dbReference type="InterPro" id="IPR000504">
    <property type="entry name" value="RRM_dom"/>
</dbReference>
<dbReference type="PANTHER" id="PTHR10352">
    <property type="entry name" value="EUKARYOTIC TRANSLATION INITIATION FACTOR 3 SUBUNIT G"/>
    <property type="match status" value="1"/>
</dbReference>
<dbReference type="Pfam" id="PF12353">
    <property type="entry name" value="eIF3g"/>
    <property type="match status" value="1"/>
</dbReference>
<dbReference type="Pfam" id="PF00076">
    <property type="entry name" value="RRM_1"/>
    <property type="match status" value="1"/>
</dbReference>
<dbReference type="PIRSF" id="PIRSF037949">
    <property type="entry name" value="Transl_init_eIF-3_RNA-bind"/>
    <property type="match status" value="1"/>
</dbReference>
<dbReference type="SMART" id="SM00360">
    <property type="entry name" value="RRM"/>
    <property type="match status" value="1"/>
</dbReference>
<dbReference type="SUPFAM" id="SSF54928">
    <property type="entry name" value="RNA-binding domain, RBD"/>
    <property type="match status" value="1"/>
</dbReference>
<dbReference type="PROSITE" id="PS50102">
    <property type="entry name" value="RRM"/>
    <property type="match status" value="1"/>
</dbReference>
<comment type="function">
    <text evidence="1">RNA-binding component of the eukaryotic translation initiation factor 3 (eIF-3) complex, which is involved in protein synthesis of a specialized repertoire of mRNAs and, together with other initiation factors, stimulates binding of mRNA and methionyl-tRNAi to the 40S ribosome. The eIF-3 complex specifically targets and initiates translation of a subset of mRNAs involved in cell proliferation. This subunit can bind 18S rRNA.</text>
</comment>
<comment type="subunit">
    <text evidence="1">Component of the eukaryotic translation initiation factor 3 (eIF-3) complex.</text>
</comment>
<comment type="subcellular location">
    <subcellularLocation>
        <location evidence="1">Cytoplasm</location>
    </subcellularLocation>
</comment>
<comment type="similarity">
    <text evidence="1">Belongs to the eIF-3 subunit G family.</text>
</comment>
<name>EIF3G_MYCMD</name>
<proteinExistence type="inferred from homology"/>
<organism>
    <name type="scientific">Mycosarcoma maydis</name>
    <name type="common">Corn smut fungus</name>
    <name type="synonym">Ustilago maydis</name>
    <dbReference type="NCBI Taxonomy" id="5270"/>
    <lineage>
        <taxon>Eukaryota</taxon>
        <taxon>Fungi</taxon>
        <taxon>Dikarya</taxon>
        <taxon>Basidiomycota</taxon>
        <taxon>Ustilaginomycotina</taxon>
        <taxon>Ustilaginomycetes</taxon>
        <taxon>Ustilaginales</taxon>
        <taxon>Ustilaginaceae</taxon>
        <taxon>Mycosarcoma</taxon>
    </lineage>
</organism>
<reference key="1">
    <citation type="journal article" date="2006" name="Nature">
        <title>Insights from the genome of the biotrophic fungal plant pathogen Ustilago maydis.</title>
        <authorList>
            <person name="Kaemper J."/>
            <person name="Kahmann R."/>
            <person name="Boelker M."/>
            <person name="Ma L.-J."/>
            <person name="Brefort T."/>
            <person name="Saville B.J."/>
            <person name="Banuett F."/>
            <person name="Kronstad J.W."/>
            <person name="Gold S.E."/>
            <person name="Mueller O."/>
            <person name="Perlin M.H."/>
            <person name="Woesten H.A.B."/>
            <person name="de Vries R."/>
            <person name="Ruiz-Herrera J."/>
            <person name="Reynaga-Pena C.G."/>
            <person name="Snetselaar K."/>
            <person name="McCann M."/>
            <person name="Perez-Martin J."/>
            <person name="Feldbruegge M."/>
            <person name="Basse C.W."/>
            <person name="Steinberg G."/>
            <person name="Ibeas J.I."/>
            <person name="Holloman W."/>
            <person name="Guzman P."/>
            <person name="Farman M.L."/>
            <person name="Stajich J.E."/>
            <person name="Sentandreu R."/>
            <person name="Gonzalez-Prieto J.M."/>
            <person name="Kennell J.C."/>
            <person name="Molina L."/>
            <person name="Schirawski J."/>
            <person name="Mendoza-Mendoza A."/>
            <person name="Greilinger D."/>
            <person name="Muench K."/>
            <person name="Roessel N."/>
            <person name="Scherer M."/>
            <person name="Vranes M."/>
            <person name="Ladendorf O."/>
            <person name="Vincon V."/>
            <person name="Fuchs U."/>
            <person name="Sandrock B."/>
            <person name="Meng S."/>
            <person name="Ho E.C.H."/>
            <person name="Cahill M.J."/>
            <person name="Boyce K.J."/>
            <person name="Klose J."/>
            <person name="Klosterman S.J."/>
            <person name="Deelstra H.J."/>
            <person name="Ortiz-Castellanos L."/>
            <person name="Li W."/>
            <person name="Sanchez-Alonso P."/>
            <person name="Schreier P.H."/>
            <person name="Haeuser-Hahn I."/>
            <person name="Vaupel M."/>
            <person name="Koopmann E."/>
            <person name="Friedrich G."/>
            <person name="Voss H."/>
            <person name="Schlueter T."/>
            <person name="Margolis J."/>
            <person name="Platt D."/>
            <person name="Swimmer C."/>
            <person name="Gnirke A."/>
            <person name="Chen F."/>
            <person name="Vysotskaia V."/>
            <person name="Mannhaupt G."/>
            <person name="Gueldener U."/>
            <person name="Muensterkoetter M."/>
            <person name="Haase D."/>
            <person name="Oesterheld M."/>
            <person name="Mewes H.-W."/>
            <person name="Mauceli E.W."/>
            <person name="DeCaprio D."/>
            <person name="Wade C.M."/>
            <person name="Butler J."/>
            <person name="Young S.K."/>
            <person name="Jaffe D.B."/>
            <person name="Calvo S.E."/>
            <person name="Nusbaum C."/>
            <person name="Galagan J.E."/>
            <person name="Birren B.W."/>
        </authorList>
    </citation>
    <scope>NUCLEOTIDE SEQUENCE [LARGE SCALE GENOMIC DNA]</scope>
    <source>
        <strain>DSM 14603 / FGSC 9021 / UM521</strain>
    </source>
</reference>
<reference key="2">
    <citation type="submission" date="2014-09" db="EMBL/GenBank/DDBJ databases">
        <authorList>
            <person name="Gueldener U."/>
            <person name="Muensterkoetter M."/>
            <person name="Walter M.C."/>
            <person name="Mannhaupt G."/>
            <person name="Kahmann R."/>
        </authorList>
    </citation>
    <scope>GENOME REANNOTATION</scope>
    <source>
        <strain>DSM 14603 / FGSC 9021 / UM521</strain>
    </source>
</reference>
<keyword id="KW-0963">Cytoplasm</keyword>
<keyword id="KW-0396">Initiation factor</keyword>
<keyword id="KW-0597">Phosphoprotein</keyword>
<keyword id="KW-0648">Protein biosynthesis</keyword>
<keyword id="KW-1185">Reference proteome</keyword>
<keyword id="KW-0694">RNA-binding</keyword>
<sequence>MAPVAAPSTSQPAGGKPMNWADEFDEPVVGDAPRIEERDEGNGVKVVIEYRTNPDGKKIKITRRVKRTLVKTKVNHEVAERKTWTKFGQEKGKAAGPHSATTTIGENVVLKMSAGNKTAEPEVDDMDKMRQQLANKRIVCRLCKGDHFTTKCPYKDTLEAIPGAGADTPEGGDGSMTPLAGMDPTNPAVAASAGGKYVPPSMRGGAKGPGEKMGGLGGMSRDDLPTLRVTNLSEDADDDDLRELFMRFGRVVRVYVGRDRETGICKGYAFVSFENREDADRARQKVDGRGYDNLILSCQWSLPRGERP</sequence>
<feature type="chain" id="PRO_0000365450" description="Eukaryotic translation initiation factor 3 subunit G">
    <location>
        <begin position="1"/>
        <end position="308"/>
    </location>
</feature>
<feature type="domain" description="RRM" evidence="1">
    <location>
        <begin position="225"/>
        <end position="303"/>
    </location>
</feature>
<feature type="region of interest" description="Disordered" evidence="2">
    <location>
        <begin position="1"/>
        <end position="23"/>
    </location>
</feature>
<evidence type="ECO:0000255" key="1">
    <source>
        <dbReference type="HAMAP-Rule" id="MF_03006"/>
    </source>
</evidence>
<evidence type="ECO:0000256" key="2">
    <source>
        <dbReference type="SAM" id="MobiDB-lite"/>
    </source>
</evidence>
<accession>Q4P7G1</accession>
<accession>A0A0D1DUD1</accession>
<protein>
    <recommendedName>
        <fullName evidence="1">Eukaryotic translation initiation factor 3 subunit G</fullName>
        <shortName evidence="1">eIF3g</shortName>
    </recommendedName>
    <alternativeName>
        <fullName evidence="1">Eukaryotic translation initiation factor 3 RNA-binding subunit</fullName>
        <shortName evidence="1">eIF-3 RNA-binding subunit</shortName>
    </alternativeName>
    <alternativeName>
        <fullName evidence="1">Translation initiation factor eIF3 p33 subunit homolog</fullName>
        <shortName evidence="1">eIF3 p33 homolog</shortName>
    </alternativeName>
</protein>